<evidence type="ECO:0000250" key="1"/>
<evidence type="ECO:0000255" key="2">
    <source>
        <dbReference type="HAMAP-Rule" id="MF_00610"/>
    </source>
</evidence>
<feature type="signal peptide" evidence="2">
    <location>
        <begin position="1"/>
        <end position="35"/>
    </location>
</feature>
<feature type="chain" id="PRO_0000342050" description="Cytochrome f">
    <location>
        <begin position="36"/>
        <end position="320"/>
    </location>
</feature>
<feature type="transmembrane region" description="Helical" evidence="2">
    <location>
        <begin position="286"/>
        <end position="306"/>
    </location>
</feature>
<feature type="binding site" description="axial binding residue" evidence="2">
    <location>
        <position position="36"/>
    </location>
    <ligand>
        <name>heme</name>
        <dbReference type="ChEBI" id="CHEBI:30413"/>
    </ligand>
    <ligandPart>
        <name>Fe</name>
        <dbReference type="ChEBI" id="CHEBI:18248"/>
    </ligandPart>
</feature>
<feature type="binding site" description="covalent" evidence="2">
    <location>
        <position position="56"/>
    </location>
    <ligand>
        <name>heme</name>
        <dbReference type="ChEBI" id="CHEBI:30413"/>
    </ligand>
</feature>
<feature type="binding site" description="covalent" evidence="2">
    <location>
        <position position="59"/>
    </location>
    <ligand>
        <name>heme</name>
        <dbReference type="ChEBI" id="CHEBI:30413"/>
    </ligand>
</feature>
<feature type="binding site" description="axial binding residue" evidence="2">
    <location>
        <position position="60"/>
    </location>
    <ligand>
        <name>heme</name>
        <dbReference type="ChEBI" id="CHEBI:30413"/>
    </ligand>
    <ligandPart>
        <name>Fe</name>
        <dbReference type="ChEBI" id="CHEBI:18248"/>
    </ligandPart>
</feature>
<dbReference type="EMBL" id="AP009371">
    <property type="protein sequence ID" value="BAF50210.1"/>
    <property type="molecule type" value="Genomic_DNA"/>
</dbReference>
<dbReference type="RefSeq" id="YP_001123386.1">
    <property type="nucleotide sequence ID" value="NC_009270.1"/>
</dbReference>
<dbReference type="SMR" id="A4QKK5"/>
<dbReference type="GeneID" id="4961692"/>
<dbReference type="GO" id="GO:0009535">
    <property type="term" value="C:chloroplast thylakoid membrane"/>
    <property type="evidence" value="ECO:0007669"/>
    <property type="project" value="UniProtKB-SubCell"/>
</dbReference>
<dbReference type="GO" id="GO:0009055">
    <property type="term" value="F:electron transfer activity"/>
    <property type="evidence" value="ECO:0007669"/>
    <property type="project" value="UniProtKB-UniRule"/>
</dbReference>
<dbReference type="GO" id="GO:0020037">
    <property type="term" value="F:heme binding"/>
    <property type="evidence" value="ECO:0007669"/>
    <property type="project" value="InterPro"/>
</dbReference>
<dbReference type="GO" id="GO:0005506">
    <property type="term" value="F:iron ion binding"/>
    <property type="evidence" value="ECO:0007669"/>
    <property type="project" value="InterPro"/>
</dbReference>
<dbReference type="GO" id="GO:0015979">
    <property type="term" value="P:photosynthesis"/>
    <property type="evidence" value="ECO:0007669"/>
    <property type="project" value="UniProtKB-UniRule"/>
</dbReference>
<dbReference type="FunFam" id="1.20.5.700:FF:000001">
    <property type="entry name" value="Cytochrome f"/>
    <property type="match status" value="1"/>
</dbReference>
<dbReference type="FunFam" id="2.40.50.100:FF:000007">
    <property type="entry name" value="Cytochrome f"/>
    <property type="match status" value="1"/>
</dbReference>
<dbReference type="FunFam" id="2.60.40.830:FF:000001">
    <property type="entry name" value="Cytochrome f"/>
    <property type="match status" value="1"/>
</dbReference>
<dbReference type="Gene3D" id="2.40.50.100">
    <property type="match status" value="1"/>
</dbReference>
<dbReference type="Gene3D" id="2.60.40.830">
    <property type="entry name" value="Cytochrome f large domain"/>
    <property type="match status" value="1"/>
</dbReference>
<dbReference type="Gene3D" id="1.20.5.700">
    <property type="entry name" value="Single helix bin"/>
    <property type="match status" value="1"/>
</dbReference>
<dbReference type="HAMAP" id="MF_00610">
    <property type="entry name" value="Cytb6_f_cytF"/>
    <property type="match status" value="1"/>
</dbReference>
<dbReference type="InterPro" id="IPR024058">
    <property type="entry name" value="Cyt-f_TM"/>
</dbReference>
<dbReference type="InterPro" id="IPR002325">
    <property type="entry name" value="Cyt_f"/>
</dbReference>
<dbReference type="InterPro" id="IPR024094">
    <property type="entry name" value="Cyt_f_lg_dom"/>
</dbReference>
<dbReference type="InterPro" id="IPR036826">
    <property type="entry name" value="Cyt_f_lg_dom_sf"/>
</dbReference>
<dbReference type="InterPro" id="IPR011054">
    <property type="entry name" value="Rudment_hybrid_motif"/>
</dbReference>
<dbReference type="PANTHER" id="PTHR33288">
    <property type="match status" value="1"/>
</dbReference>
<dbReference type="PANTHER" id="PTHR33288:SF10">
    <property type="entry name" value="CYTOCHROME F"/>
    <property type="match status" value="1"/>
</dbReference>
<dbReference type="Pfam" id="PF01333">
    <property type="entry name" value="Apocytochr_F_C"/>
    <property type="match status" value="1"/>
</dbReference>
<dbReference type="Pfam" id="PF16639">
    <property type="entry name" value="Apocytochr_F_N"/>
    <property type="match status" value="1"/>
</dbReference>
<dbReference type="PRINTS" id="PR00610">
    <property type="entry name" value="CYTOCHROMEF"/>
</dbReference>
<dbReference type="SUPFAM" id="SSF103431">
    <property type="entry name" value="Cytochrome f subunit of the cytochrome b6f complex, transmembrane anchor"/>
    <property type="match status" value="1"/>
</dbReference>
<dbReference type="SUPFAM" id="SSF49441">
    <property type="entry name" value="Cytochrome f, large domain"/>
    <property type="match status" value="1"/>
</dbReference>
<dbReference type="SUPFAM" id="SSF51246">
    <property type="entry name" value="Rudiment single hybrid motif"/>
    <property type="match status" value="1"/>
</dbReference>
<dbReference type="PROSITE" id="PS51010">
    <property type="entry name" value="CYTF"/>
    <property type="match status" value="1"/>
</dbReference>
<protein>
    <recommendedName>
        <fullName evidence="2">Cytochrome f</fullName>
    </recommendedName>
</protein>
<gene>
    <name evidence="2" type="primary">petA</name>
</gene>
<accession>A4QKK5</accession>
<sequence>MQTRNTFSWIREEITRSISVSLMIYIITWASISGAYPIFAQQNYENPREATGRIVCANCHLANKPVDIEVPQTVLPDTVFEAVVKIPYDMQLKQVLANGKKGALNVGAVLILPEGFELAPPDRISPEMKEKIGNLSFQNYRPNKKNILVIGPVPGQKYSEITFPILAPDPATNKDVHFLKYPIYVGGNRGRGQIYPDGSKSNNTVYNATAGGIISKILRKEKGGYEITIVDASNGREVIDIIPRGLELLVSEGESIKLDQPLTSNPNVGGFGQGDAEIVLQDPLRVQGLLFFLGSVVLAQIFLVLKKKQFEKVQLSEMNF</sequence>
<organism>
    <name type="scientific">Capsella bursa-pastoris</name>
    <name type="common">Shepherd's purse</name>
    <name type="synonym">Thlaspi bursa-pastoris</name>
    <dbReference type="NCBI Taxonomy" id="3719"/>
    <lineage>
        <taxon>Eukaryota</taxon>
        <taxon>Viridiplantae</taxon>
        <taxon>Streptophyta</taxon>
        <taxon>Embryophyta</taxon>
        <taxon>Tracheophyta</taxon>
        <taxon>Spermatophyta</taxon>
        <taxon>Magnoliopsida</taxon>
        <taxon>eudicotyledons</taxon>
        <taxon>Gunneridae</taxon>
        <taxon>Pentapetalae</taxon>
        <taxon>rosids</taxon>
        <taxon>malvids</taxon>
        <taxon>Brassicales</taxon>
        <taxon>Brassicaceae</taxon>
        <taxon>Camelineae</taxon>
        <taxon>Capsella</taxon>
    </lineage>
</organism>
<geneLocation type="chloroplast"/>
<name>CYF_CAPBU</name>
<reference key="1">
    <citation type="submission" date="2007-03" db="EMBL/GenBank/DDBJ databases">
        <title>Sequencing analysis of Capsella bursa-pastoris JO22 chloroplast DNA.</title>
        <authorList>
            <person name="Hosouchi T."/>
            <person name="Tsuruoka H."/>
            <person name="Kotani H."/>
        </authorList>
    </citation>
    <scope>NUCLEOTIDE SEQUENCE [LARGE SCALE GENOMIC DNA]</scope>
</reference>
<comment type="function">
    <text evidence="2">Component of the cytochrome b6-f complex, which mediates electron transfer between photosystem II (PSII) and photosystem I (PSI), cyclic electron flow around PSI, and state transitions.</text>
</comment>
<comment type="cofactor">
    <cofactor evidence="2">
        <name>heme</name>
        <dbReference type="ChEBI" id="CHEBI:30413"/>
    </cofactor>
    <text evidence="2">Binds 1 heme group covalently.</text>
</comment>
<comment type="subunit">
    <text evidence="1">The 4 large subunits of the cytochrome b6-f complex are cytochrome b6, subunit IV (17 kDa polypeptide, petD), cytochrome f and the Rieske protein, while the 4 small subunits are PetG, PetL, PetM and PetN. The complex functions as a dimer (By similarity).</text>
</comment>
<comment type="subcellular location">
    <subcellularLocation>
        <location evidence="2">Plastid</location>
        <location evidence="2">Chloroplast thylakoid membrane</location>
        <topology evidence="2">Single-pass membrane protein</topology>
    </subcellularLocation>
</comment>
<comment type="similarity">
    <text evidence="2">Belongs to the cytochrome f family.</text>
</comment>
<proteinExistence type="inferred from homology"/>
<keyword id="KW-0150">Chloroplast</keyword>
<keyword id="KW-0249">Electron transport</keyword>
<keyword id="KW-0349">Heme</keyword>
<keyword id="KW-0408">Iron</keyword>
<keyword id="KW-0472">Membrane</keyword>
<keyword id="KW-0479">Metal-binding</keyword>
<keyword id="KW-0602">Photosynthesis</keyword>
<keyword id="KW-0934">Plastid</keyword>
<keyword id="KW-0732">Signal</keyword>
<keyword id="KW-0793">Thylakoid</keyword>
<keyword id="KW-0812">Transmembrane</keyword>
<keyword id="KW-1133">Transmembrane helix</keyword>
<keyword id="KW-0813">Transport</keyword>